<comment type="function">
    <text evidence="9 18 19 20">Component of the ubiquinol-cytochrome c oxidoreductase, a multisubunit transmembrane complex that is part of the mitochondrial electron transport chain which drives oxidative phosphorylation. The respiratory chain contains 3 multisubunit complexes succinate dehydrogenase (complex II, CII), ubiquinol-cytochrome c oxidoreductase (cytochrome b-c1 complex, complex III, CIII) and cytochrome c oxidase (complex IV, CIV), that cooperate to transfer electrons derived from NADH and succinate to molecular oxygen, creating an electrochemical gradient over the inner membrane that drives transmembrane transport and the ATP synthase. The cytochrome b-c1 complex catalyzes electron transfer from ubiquinol to cytochrome c, linking this redox reaction to translocation of protons across the mitochondrial inner membrane, with protons being carried across the membrane as hydrogens on the quinol. In the process called Q cycle, 2 protons are consumed from the matrix, 4 protons are released into the intermembrane space and 2 electrons are passed to cytochrome c (Probable). Cytochrome b is a catalytic core subunit containing 2 b-type hemes BL and BH topographically segregated in the quinone reduction (Qi) and quinol oxidation (Q0) sites on opposite sides of the membrane (PubMed:18390544).</text>
</comment>
<comment type="catalytic activity">
    <reaction evidence="10 17">
        <text>a quinol + 2 Fe(III)-[cytochrome c](out) = a quinone + 2 Fe(II)-[cytochrome c](out) + 2 H(+)(out)</text>
        <dbReference type="Rhea" id="RHEA:11484"/>
        <dbReference type="Rhea" id="RHEA-COMP:10350"/>
        <dbReference type="Rhea" id="RHEA-COMP:14399"/>
        <dbReference type="ChEBI" id="CHEBI:15378"/>
        <dbReference type="ChEBI" id="CHEBI:24646"/>
        <dbReference type="ChEBI" id="CHEBI:29033"/>
        <dbReference type="ChEBI" id="CHEBI:29034"/>
        <dbReference type="ChEBI" id="CHEBI:132124"/>
        <dbReference type="EC" id="7.1.1.8"/>
    </reaction>
</comment>
<comment type="cofactor">
    <cofactor evidence="7 8 9 11">
        <name>heme b</name>
        <dbReference type="ChEBI" id="CHEBI:60344"/>
    </cofactor>
    <text evidence="7 8 9 11">Binds 2 heme b groups non-covalently per subunit.</text>
</comment>
<comment type="subunit">
    <text evidence="5 6 7 8 11 12 17">Component of the ubiquinol-cytochrome c oxidoreductase (cytochrome b-c1 complex, complex III, CIII), a multisubunit enzyme composed of 10 subunits. The complex is composed of 3 respiratory subunits cytochrome b (COB), cytochrome c1 (CYT1) and Rieske protein (RIP1), 2 core protein subunits COR1 and QCR2, and 5 low-molecular weight protein subunits QCR6, QCR7, QCR8, QCR9 and QCR10 (PubMed:10873857, PubMed:11880631, PubMed:30598554, PubMed:8031140). The complex exists as an obligatory dimer and forms supercomplexes (SCs) in the inner mitochondrial membrane with a monomer or a dimer of cytochrome c oxidase (complex IV, CIV), resulting in 2 different assemblies (supercomplexes III(2)IV and III(2)IV(2)) (PubMed:10764779, PubMed:10775262, PubMed:30598554, PubMed:30598556).</text>
</comment>
<comment type="subcellular location">
    <subcellularLocation>
        <location evidence="9 11 17">Mitochondrion inner membrane</location>
        <topology evidence="7 8 9 11 17">Multi-pass membrane protein</topology>
    </subcellularLocation>
</comment>
<comment type="miscellaneous">
    <text evidence="1">Heme 1 (or BL or b562) is low-potential and absorbs at about 562 nm, and heme 2 (or BH or b566) is high-potential and absorbs at about 566 nm.</text>
</comment>
<comment type="similarity">
    <text evidence="3 4">Belongs to the cytochrome b family.</text>
</comment>
<feature type="chain" id="PRO_0000061769" description="Cytochrome b">
    <location>
        <begin position="1"/>
        <end position="385"/>
    </location>
</feature>
<feature type="topological domain" description="Mitochondrial matrix" evidence="9 11 20">
    <location>
        <begin position="1"/>
        <end position="27"/>
    </location>
</feature>
<feature type="transmembrane region" description="Helical" evidence="7 8 9 11 26">
    <location>
        <begin position="28"/>
        <end position="51"/>
    </location>
</feature>
<feature type="topological domain" description="Mitochondrial intermembrane" evidence="9 11 20">
    <location>
        <begin position="52"/>
        <end position="74"/>
    </location>
</feature>
<feature type="transmembrane region" description="Helical" evidence="7 8 9 11 26">
    <location>
        <begin position="75"/>
        <end position="102"/>
    </location>
</feature>
<feature type="topological domain" description="Mitochondrial matrix" evidence="9 11 20">
    <location>
        <begin position="103"/>
        <end position="110"/>
    </location>
</feature>
<feature type="transmembrane region" description="Helical" evidence="7 8 9 11 26">
    <location>
        <begin position="111"/>
        <end position="135"/>
    </location>
</feature>
<feature type="topological domain" description="Mitochondrial intermembrane" evidence="9 11 20">
    <location>
        <begin position="136"/>
        <end position="172"/>
    </location>
</feature>
<feature type="transmembrane region" description="Helical" evidence="7 8 9 11 26">
    <location>
        <begin position="173"/>
        <end position="204"/>
    </location>
</feature>
<feature type="topological domain" description="Mitochondrial matrix" evidence="9 11 20">
    <location>
        <begin position="205"/>
        <end position="223"/>
    </location>
</feature>
<feature type="transmembrane region" description="Helical" evidence="7 8 9 11 26">
    <location>
        <begin position="224"/>
        <end position="246"/>
    </location>
</feature>
<feature type="topological domain" description="Mitochondrial intermembrane" evidence="9 11 20">
    <location>
        <begin position="247"/>
        <end position="287"/>
    </location>
</feature>
<feature type="transmembrane region" description="Helical" evidence="7 8 9 11 26">
    <location>
        <begin position="288"/>
        <end position="308"/>
    </location>
</feature>
<feature type="topological domain" description="Mitochondrial matrix" evidence="9 11 20">
    <location>
        <begin position="309"/>
        <end position="319"/>
    </location>
</feature>
<feature type="transmembrane region" description="Helical" evidence="7 8 9 11 26">
    <location>
        <begin position="320"/>
        <end position="340"/>
    </location>
</feature>
<feature type="topological domain" description="Mitochondrial intermembrane" evidence="9 11 20">
    <location>
        <begin position="341"/>
        <end position="347"/>
    </location>
</feature>
<feature type="transmembrane region" description="Helical" evidence="7 8 9 11 26">
    <location>
        <begin position="348"/>
        <end position="364"/>
    </location>
</feature>
<feature type="topological domain" description="Mitochondrial matrix" evidence="9 11 20">
    <location>
        <begin position="365"/>
        <end position="385"/>
    </location>
</feature>
<feature type="binding site" evidence="11">
    <location>
        <position position="16"/>
    </location>
    <ligand>
        <name>a ubiquinone</name>
        <dbReference type="ChEBI" id="CHEBI:16389"/>
    </ligand>
</feature>
<feature type="binding site" description="axial binding residue" evidence="7 8 9 11 21 22 23 24 25 26 27 28">
    <location>
        <position position="82"/>
    </location>
    <ligand>
        <name>heme b</name>
        <dbReference type="ChEBI" id="CHEBI:60344"/>
        <label>b562</label>
    </ligand>
    <ligandPart>
        <name>Fe</name>
        <dbReference type="ChEBI" id="CHEBI:18248"/>
    </ligandPart>
</feature>
<feature type="binding site" description="axial binding residue" evidence="7 8 9 11 21 22 23 24 25 26 27 28">
    <location>
        <position position="96"/>
    </location>
    <ligand>
        <name>heme b</name>
        <dbReference type="ChEBI" id="CHEBI:60344"/>
        <label>b566</label>
    </ligand>
    <ligandPart>
        <name>Fe</name>
        <dbReference type="ChEBI" id="CHEBI:18248"/>
    </ligandPart>
</feature>
<feature type="binding site" description="axial binding residue" evidence="7 8 9 11 21 22 23 24 25 26 27 28">
    <location>
        <position position="183"/>
    </location>
    <ligand>
        <name>heme b</name>
        <dbReference type="ChEBI" id="CHEBI:60344"/>
        <label>b562</label>
    </ligand>
    <ligandPart>
        <name>Fe</name>
        <dbReference type="ChEBI" id="CHEBI:18248"/>
    </ligandPart>
</feature>
<feature type="binding site" description="axial binding residue" evidence="7 8 9 11 21 22 23 24 25 26 27 28">
    <location>
        <position position="197"/>
    </location>
    <ligand>
        <name>heme b</name>
        <dbReference type="ChEBI" id="CHEBI:60344"/>
        <label>b566</label>
    </ligand>
    <ligandPart>
        <name>Fe</name>
        <dbReference type="ChEBI" id="CHEBI:18248"/>
    </ligandPart>
</feature>
<feature type="binding site" evidence="2">
    <location>
        <position position="202"/>
    </location>
    <ligand>
        <name>a ubiquinone</name>
        <dbReference type="ChEBI" id="CHEBI:16389"/>
    </ligand>
</feature>
<feature type="sequence variant" description="In strain: ATCC 44821 / 777-3A." evidence="15 16">
    <original>I</original>
    <variation>T</variation>
    <location>
        <position position="122"/>
    </location>
</feature>
<feature type="sequence variant" description="In strain: D273-10B/A21." evidence="13 14">
    <original>I</original>
    <variation>ID</variation>
    <location>
        <position position="269"/>
    </location>
</feature>
<feature type="mutagenesis site" description="In W7: Causes respiratory deficiency." evidence="10">
    <original>G</original>
    <variation>S</variation>
    <location>
        <position position="131"/>
    </location>
</feature>
<feature type="helix" evidence="29">
    <location>
        <begin position="3"/>
        <end position="6"/>
    </location>
</feature>
<feature type="helix" evidence="29">
    <location>
        <begin position="10"/>
        <end position="17"/>
    </location>
</feature>
<feature type="strand" evidence="29">
    <location>
        <begin position="21"/>
        <end position="23"/>
    </location>
</feature>
<feature type="helix" evidence="29">
    <location>
        <begin position="28"/>
        <end position="31"/>
    </location>
</feature>
<feature type="helix" evidence="29">
    <location>
        <begin position="32"/>
        <end position="51"/>
    </location>
</feature>
<feature type="turn" evidence="29">
    <location>
        <begin position="58"/>
        <end position="60"/>
    </location>
</feature>
<feature type="helix" evidence="29">
    <location>
        <begin position="61"/>
        <end position="70"/>
    </location>
</feature>
<feature type="helix" evidence="29">
    <location>
        <begin position="75"/>
        <end position="102"/>
    </location>
</feature>
<feature type="turn" evidence="29">
    <location>
        <begin position="103"/>
        <end position="106"/>
    </location>
</feature>
<feature type="helix" evidence="32">
    <location>
        <begin position="108"/>
        <end position="110"/>
    </location>
</feature>
<feature type="helix" evidence="29">
    <location>
        <begin position="111"/>
        <end position="135"/>
    </location>
</feature>
<feature type="helix" evidence="29">
    <location>
        <begin position="138"/>
        <end position="149"/>
    </location>
</feature>
<feature type="helix" evidence="29">
    <location>
        <begin position="150"/>
        <end position="153"/>
    </location>
</feature>
<feature type="turn" evidence="29">
    <location>
        <begin position="155"/>
        <end position="157"/>
    </location>
</feature>
<feature type="helix" evidence="29">
    <location>
        <begin position="158"/>
        <end position="166"/>
    </location>
</feature>
<feature type="strand" evidence="29">
    <location>
        <begin position="168"/>
        <end position="171"/>
    </location>
</feature>
<feature type="helix" evidence="29">
    <location>
        <begin position="173"/>
        <end position="204"/>
    </location>
</feature>
<feature type="strand" evidence="31">
    <location>
        <begin position="209"/>
        <end position="212"/>
    </location>
</feature>
<feature type="strand" evidence="29">
    <location>
        <begin position="217"/>
        <end position="220"/>
    </location>
</feature>
<feature type="turn" evidence="29">
    <location>
        <begin position="221"/>
        <end position="223"/>
    </location>
</feature>
<feature type="helix" evidence="29">
    <location>
        <begin position="224"/>
        <end position="246"/>
    </location>
</feature>
<feature type="turn" evidence="29">
    <location>
        <begin position="248"/>
        <end position="251"/>
    </location>
</feature>
<feature type="helix" evidence="29">
    <location>
        <begin position="254"/>
        <end position="257"/>
    </location>
</feature>
<feature type="strand" evidence="30">
    <location>
        <begin position="262"/>
        <end position="264"/>
    </location>
</feature>
<feature type="helix" evidence="29">
    <location>
        <begin position="273"/>
        <end position="275"/>
    </location>
</feature>
<feature type="helix" evidence="29">
    <location>
        <begin position="276"/>
        <end position="283"/>
    </location>
</feature>
<feature type="strand" evidence="29">
    <location>
        <begin position="285"/>
        <end position="287"/>
    </location>
</feature>
<feature type="helix" evidence="29">
    <location>
        <begin position="288"/>
        <end position="300"/>
    </location>
</feature>
<feature type="helix" evidence="29">
    <location>
        <begin position="301"/>
        <end position="304"/>
    </location>
</feature>
<feature type="helix" evidence="29">
    <location>
        <begin position="305"/>
        <end position="308"/>
    </location>
</feature>
<feature type="strand" evidence="29">
    <location>
        <begin position="312"/>
        <end position="316"/>
    </location>
</feature>
<feature type="helix" evidence="29">
    <location>
        <begin position="320"/>
        <end position="340"/>
    </location>
</feature>
<feature type="helix" evidence="29">
    <location>
        <begin position="348"/>
        <end position="364"/>
    </location>
</feature>
<feature type="helix" evidence="29">
    <location>
        <begin position="366"/>
        <end position="380"/>
    </location>
</feature>
<name>CYB_YEAST</name>
<evidence type="ECO:0000250" key="1"/>
<evidence type="ECO:0000250" key="2">
    <source>
        <dbReference type="UniProtKB" id="P00157"/>
    </source>
</evidence>
<evidence type="ECO:0000255" key="3">
    <source>
        <dbReference type="PROSITE-ProRule" id="PRU00967"/>
    </source>
</evidence>
<evidence type="ECO:0000255" key="4">
    <source>
        <dbReference type="PROSITE-ProRule" id="PRU00968"/>
    </source>
</evidence>
<evidence type="ECO:0000269" key="5">
    <source>
    </source>
</evidence>
<evidence type="ECO:0000269" key="6">
    <source>
    </source>
</evidence>
<evidence type="ECO:0000269" key="7">
    <source>
    </source>
</evidence>
<evidence type="ECO:0000269" key="8">
    <source>
    </source>
</evidence>
<evidence type="ECO:0000269" key="9">
    <source>
    </source>
</evidence>
<evidence type="ECO:0000269" key="10">
    <source>
    </source>
</evidence>
<evidence type="ECO:0000269" key="11">
    <source>
    </source>
</evidence>
<evidence type="ECO:0000269" key="12">
    <source>
    </source>
</evidence>
<evidence type="ECO:0000269" key="13">
    <source>
    </source>
</evidence>
<evidence type="ECO:0000269" key="14">
    <source>
    </source>
</evidence>
<evidence type="ECO:0000269" key="15">
    <source>
    </source>
</evidence>
<evidence type="ECO:0000269" key="16">
    <source>
    </source>
</evidence>
<evidence type="ECO:0000269" key="17">
    <source>
    </source>
</evidence>
<evidence type="ECO:0000305" key="18">
    <source>
    </source>
</evidence>
<evidence type="ECO:0000305" key="19">
    <source>
    </source>
</evidence>
<evidence type="ECO:0000305" key="20">
    <source>
    </source>
</evidence>
<evidence type="ECO:0007744" key="21">
    <source>
        <dbReference type="PDB" id="1EZV"/>
    </source>
</evidence>
<evidence type="ECO:0007744" key="22">
    <source>
        <dbReference type="PDB" id="1KB9"/>
    </source>
</evidence>
<evidence type="ECO:0007744" key="23">
    <source>
        <dbReference type="PDB" id="1KYO"/>
    </source>
</evidence>
<evidence type="ECO:0007744" key="24">
    <source>
        <dbReference type="PDB" id="1P84"/>
    </source>
</evidence>
<evidence type="ECO:0007744" key="25">
    <source>
        <dbReference type="PDB" id="2IBZ"/>
    </source>
</evidence>
<evidence type="ECO:0007744" key="26">
    <source>
        <dbReference type="PDB" id="3CX5"/>
    </source>
</evidence>
<evidence type="ECO:0007744" key="27">
    <source>
        <dbReference type="PDB" id="3CXH"/>
    </source>
</evidence>
<evidence type="ECO:0007744" key="28">
    <source>
        <dbReference type="PDB" id="4PD4"/>
    </source>
</evidence>
<evidence type="ECO:0007829" key="29">
    <source>
        <dbReference type="PDB" id="3CX5"/>
    </source>
</evidence>
<evidence type="ECO:0007829" key="30">
    <source>
        <dbReference type="PDB" id="6YMX"/>
    </source>
</evidence>
<evidence type="ECO:0007829" key="31">
    <source>
        <dbReference type="PDB" id="8EC0"/>
    </source>
</evidence>
<evidence type="ECO:0007829" key="32">
    <source>
        <dbReference type="PDB" id="9ETZ"/>
    </source>
</evidence>
<organism>
    <name type="scientific">Saccharomyces cerevisiae (strain ATCC 204508 / S288c)</name>
    <name type="common">Baker's yeast</name>
    <dbReference type="NCBI Taxonomy" id="559292"/>
    <lineage>
        <taxon>Eukaryota</taxon>
        <taxon>Fungi</taxon>
        <taxon>Dikarya</taxon>
        <taxon>Ascomycota</taxon>
        <taxon>Saccharomycotina</taxon>
        <taxon>Saccharomycetes</taxon>
        <taxon>Saccharomycetales</taxon>
        <taxon>Saccharomycetaceae</taxon>
        <taxon>Saccharomyces</taxon>
    </lineage>
</organism>
<geneLocation type="mitochondrion"/>
<gene>
    <name type="primary">COB</name>
    <name type="synonym">CYTB</name>
    <name type="ordered locus">Q0105</name>
</gene>
<dbReference type="EC" id="7.1.1.8" evidence="10 17"/>
<dbReference type="EMBL" id="V00696">
    <property type="protein sequence ID" value="CAA24073.2"/>
    <property type="molecule type" value="Genomic_DNA"/>
</dbReference>
<dbReference type="EMBL" id="X84042">
    <property type="protein sequence ID" value="CAA58861.1"/>
    <property type="molecule type" value="mRNA"/>
</dbReference>
<dbReference type="EMBL" id="KP263414">
    <property type="protein sequence ID" value="AIZ98890.1"/>
    <property type="molecule type" value="Genomic_DNA"/>
</dbReference>
<dbReference type="EMBL" id="AH001282">
    <property type="protein sequence ID" value="AAA32151.2"/>
    <property type="molecule type" value="Genomic_DNA"/>
</dbReference>
<dbReference type="EMBL" id="AH001282">
    <property type="protein sequence ID" value="AAA32152.2"/>
    <property type="molecule type" value="Genomic_DNA"/>
</dbReference>
<dbReference type="PIR" id="A00159">
    <property type="entry name" value="CBBY"/>
</dbReference>
<dbReference type="PIR" id="S78660">
    <property type="entry name" value="S78660"/>
</dbReference>
<dbReference type="RefSeq" id="NP_009315.1">
    <property type="nucleotide sequence ID" value="NC_001224.1"/>
</dbReference>
<dbReference type="PDB" id="1EZV">
    <property type="method" value="X-ray"/>
    <property type="resolution" value="2.30 A"/>
    <property type="chains" value="C=1-385"/>
</dbReference>
<dbReference type="PDB" id="1KB9">
    <property type="method" value="X-ray"/>
    <property type="resolution" value="2.30 A"/>
    <property type="chains" value="C=1-385"/>
</dbReference>
<dbReference type="PDB" id="1KYO">
    <property type="method" value="X-ray"/>
    <property type="resolution" value="2.97 A"/>
    <property type="chains" value="C/N=1-385"/>
</dbReference>
<dbReference type="PDB" id="1P84">
    <property type="method" value="X-ray"/>
    <property type="resolution" value="2.50 A"/>
    <property type="chains" value="C=1-385"/>
</dbReference>
<dbReference type="PDB" id="2IBZ">
    <property type="method" value="X-ray"/>
    <property type="resolution" value="2.30 A"/>
    <property type="chains" value="C=1-385"/>
</dbReference>
<dbReference type="PDB" id="3CX5">
    <property type="method" value="X-ray"/>
    <property type="resolution" value="1.90 A"/>
    <property type="chains" value="C/N=1-385"/>
</dbReference>
<dbReference type="PDB" id="3CXH">
    <property type="method" value="X-ray"/>
    <property type="resolution" value="2.50 A"/>
    <property type="chains" value="C/N=1-385"/>
</dbReference>
<dbReference type="PDB" id="4PD4">
    <property type="method" value="X-ray"/>
    <property type="resolution" value="3.04 A"/>
    <property type="chains" value="C=1-385"/>
</dbReference>
<dbReference type="PDB" id="6GIQ">
    <property type="method" value="EM"/>
    <property type="resolution" value="3.23 A"/>
    <property type="chains" value="C/N=1-385"/>
</dbReference>
<dbReference type="PDB" id="6HU9">
    <property type="method" value="EM"/>
    <property type="resolution" value="3.35 A"/>
    <property type="chains" value="C/N=1-385"/>
</dbReference>
<dbReference type="PDB" id="6T0B">
    <property type="method" value="EM"/>
    <property type="resolution" value="2.80 A"/>
    <property type="chains" value="C/N=1-385"/>
</dbReference>
<dbReference type="PDB" id="6T15">
    <property type="method" value="EM"/>
    <property type="resolution" value="3.29 A"/>
    <property type="chains" value="C/N=1-385"/>
</dbReference>
<dbReference type="PDB" id="6YMX">
    <property type="method" value="EM"/>
    <property type="resolution" value="3.17 A"/>
    <property type="chains" value="C/N=1-385"/>
</dbReference>
<dbReference type="PDB" id="8E7S">
    <property type="method" value="EM"/>
    <property type="resolution" value="3.20 A"/>
    <property type="chains" value="J/j=1-385"/>
</dbReference>
<dbReference type="PDB" id="8EC0">
    <property type="method" value="EM"/>
    <property type="resolution" value="3.30 A"/>
    <property type="chains" value="J/j=1-385"/>
</dbReference>
<dbReference type="PDB" id="8YHQ">
    <property type="method" value="EM"/>
    <property type="resolution" value="2.42 A"/>
    <property type="chains" value="C/L=1-385"/>
</dbReference>
<dbReference type="PDB" id="8YIN">
    <property type="method" value="EM"/>
    <property type="resolution" value="2.74 A"/>
    <property type="chains" value="C/N=1-385"/>
</dbReference>
<dbReference type="PDB" id="8ZMT">
    <property type="method" value="EM"/>
    <property type="resolution" value="2.52 A"/>
    <property type="chains" value="C/N=1-385"/>
</dbReference>
<dbReference type="PDB" id="9ETZ">
    <property type="method" value="EM"/>
    <property type="resolution" value="2.40 A"/>
    <property type="chains" value="C/N=1-385"/>
</dbReference>
<dbReference type="PDBsum" id="1EZV"/>
<dbReference type="PDBsum" id="1KB9"/>
<dbReference type="PDBsum" id="1KYO"/>
<dbReference type="PDBsum" id="1P84"/>
<dbReference type="PDBsum" id="2IBZ"/>
<dbReference type="PDBsum" id="3CX5"/>
<dbReference type="PDBsum" id="3CXH"/>
<dbReference type="PDBsum" id="4PD4"/>
<dbReference type="PDBsum" id="6GIQ"/>
<dbReference type="PDBsum" id="6HU9"/>
<dbReference type="PDBsum" id="6T0B"/>
<dbReference type="PDBsum" id="6T15"/>
<dbReference type="PDBsum" id="6YMX"/>
<dbReference type="PDBsum" id="8E7S"/>
<dbReference type="PDBsum" id="8EC0"/>
<dbReference type="PDBsum" id="8YHQ"/>
<dbReference type="PDBsum" id="8YIN"/>
<dbReference type="PDBsum" id="8ZMT"/>
<dbReference type="PDBsum" id="9ETZ"/>
<dbReference type="EMDB" id="EMD-0262"/>
<dbReference type="EMDB" id="EMD-10317"/>
<dbReference type="EMDB" id="EMD-10340"/>
<dbReference type="EMDB" id="EMD-19963"/>
<dbReference type="EMDB" id="EMD-27940"/>
<dbReference type="EMDB" id="EMD-28011"/>
<dbReference type="SMR" id="P00163"/>
<dbReference type="BioGRID" id="34779">
    <property type="interactions" value="40"/>
</dbReference>
<dbReference type="ComplexPortal" id="CPX-567">
    <property type="entry name" value="Mitochondrial respiratory chain complex III"/>
</dbReference>
<dbReference type="FunCoup" id="P00163">
    <property type="interactions" value="783"/>
</dbReference>
<dbReference type="IntAct" id="P00163">
    <property type="interactions" value="4"/>
</dbReference>
<dbReference type="STRING" id="4932.Q0105"/>
<dbReference type="ChEMBL" id="CHEMBL4296317"/>
<dbReference type="TCDB" id="3.D.3.3.1">
    <property type="family name" value="the proton-translocating quinol:cytochrome c reductase (qcr) superfamily"/>
</dbReference>
<dbReference type="GlyGen" id="P00163">
    <property type="glycosylation" value="1 site"/>
</dbReference>
<dbReference type="PaxDb" id="4932-Q0105"/>
<dbReference type="PeptideAtlas" id="P00163"/>
<dbReference type="TopDownProteomics" id="P00163"/>
<dbReference type="EnsemblFungi" id="Q0105_mRNA">
    <property type="protein sequence ID" value="Q0105"/>
    <property type="gene ID" value="Q0105"/>
</dbReference>
<dbReference type="GeneID" id="854583"/>
<dbReference type="KEGG" id="sce:Q0105"/>
<dbReference type="AGR" id="SGD:S000007270"/>
<dbReference type="SGD" id="S000007270">
    <property type="gene designation" value="COB"/>
</dbReference>
<dbReference type="VEuPathDB" id="FungiDB:Q0105"/>
<dbReference type="eggNOG" id="KOG4663">
    <property type="taxonomic scope" value="Eukaryota"/>
</dbReference>
<dbReference type="GeneTree" id="ENSGT00390000017948"/>
<dbReference type="HOGENOM" id="CLU_031114_3_0_1"/>
<dbReference type="InParanoid" id="P00163"/>
<dbReference type="OMA" id="NISAWWN"/>
<dbReference type="OrthoDB" id="244at2759"/>
<dbReference type="BioCyc" id="MetaCyc:Q0105-MONOMER"/>
<dbReference type="BioCyc" id="YEAST:Q0105-MONOMER"/>
<dbReference type="Reactome" id="R-SCE-611105">
    <property type="pathway name" value="Respiratory electron transport"/>
</dbReference>
<dbReference type="Reactome" id="R-SCE-9865878">
    <property type="pathway name" value="Complex III assembly"/>
</dbReference>
<dbReference type="BioGRID-ORCS" id="854583">
    <property type="hits" value="0 hits in 10 CRISPR screens"/>
</dbReference>
<dbReference type="EvolutionaryTrace" id="P00163"/>
<dbReference type="PRO" id="PR:P00163"/>
<dbReference type="Proteomes" id="UP000002311">
    <property type="component" value="Mitochondrion"/>
</dbReference>
<dbReference type="RNAct" id="P00163">
    <property type="molecule type" value="protein"/>
</dbReference>
<dbReference type="GO" id="GO:0016020">
    <property type="term" value="C:membrane"/>
    <property type="evidence" value="ECO:0000318"/>
    <property type="project" value="GO_Central"/>
</dbReference>
<dbReference type="GO" id="GO:0005743">
    <property type="term" value="C:mitochondrial inner membrane"/>
    <property type="evidence" value="ECO:0000314"/>
    <property type="project" value="UniProtKB"/>
</dbReference>
<dbReference type="GO" id="GO:0005739">
    <property type="term" value="C:mitochondrion"/>
    <property type="evidence" value="ECO:0007005"/>
    <property type="project" value="SGD"/>
</dbReference>
<dbReference type="GO" id="GO:0045275">
    <property type="term" value="C:respiratory chain complex III"/>
    <property type="evidence" value="ECO:0000314"/>
    <property type="project" value="UniProtKB"/>
</dbReference>
<dbReference type="GO" id="GO:0046872">
    <property type="term" value="F:metal ion binding"/>
    <property type="evidence" value="ECO:0007669"/>
    <property type="project" value="UniProtKB-KW"/>
</dbReference>
<dbReference type="GO" id="GO:0008121">
    <property type="term" value="F:ubiquinol-cytochrome-c reductase activity"/>
    <property type="evidence" value="ECO:0000314"/>
    <property type="project" value="UniProtKB"/>
</dbReference>
<dbReference type="GO" id="GO:0009060">
    <property type="term" value="P:aerobic respiration"/>
    <property type="evidence" value="ECO:0000315"/>
    <property type="project" value="SGD"/>
</dbReference>
<dbReference type="GO" id="GO:0045333">
    <property type="term" value="P:cellular respiration"/>
    <property type="evidence" value="ECO:0000314"/>
    <property type="project" value="ComplexPortal"/>
</dbReference>
<dbReference type="GO" id="GO:0006122">
    <property type="term" value="P:mitochondrial electron transport, ubiquinol to cytochrome c"/>
    <property type="evidence" value="ECO:0000314"/>
    <property type="project" value="UniProtKB"/>
</dbReference>
<dbReference type="CDD" id="cd00290">
    <property type="entry name" value="cytochrome_b_C"/>
    <property type="match status" value="1"/>
</dbReference>
<dbReference type="CDD" id="cd00284">
    <property type="entry name" value="Cytochrome_b_N"/>
    <property type="match status" value="1"/>
</dbReference>
<dbReference type="FunFam" id="1.20.810.10:FF:000002">
    <property type="entry name" value="Cytochrome b"/>
    <property type="match status" value="1"/>
</dbReference>
<dbReference type="Gene3D" id="1.20.810.10">
    <property type="entry name" value="Cytochrome Bc1 Complex, Chain C"/>
    <property type="match status" value="1"/>
</dbReference>
<dbReference type="InterPro" id="IPR005798">
    <property type="entry name" value="Cyt_b/b6_C"/>
</dbReference>
<dbReference type="InterPro" id="IPR036150">
    <property type="entry name" value="Cyt_b/b6_C_sf"/>
</dbReference>
<dbReference type="InterPro" id="IPR005797">
    <property type="entry name" value="Cyt_b/b6_N"/>
</dbReference>
<dbReference type="InterPro" id="IPR027387">
    <property type="entry name" value="Cytb/b6-like_sf"/>
</dbReference>
<dbReference type="InterPro" id="IPR030689">
    <property type="entry name" value="Cytochrome_b"/>
</dbReference>
<dbReference type="InterPro" id="IPR048260">
    <property type="entry name" value="Cytochrome_b_C_euk/bac"/>
</dbReference>
<dbReference type="InterPro" id="IPR048259">
    <property type="entry name" value="Cytochrome_b_N_euk/bac"/>
</dbReference>
<dbReference type="InterPro" id="IPR016174">
    <property type="entry name" value="Di-haem_cyt_TM"/>
</dbReference>
<dbReference type="PANTHER" id="PTHR19271">
    <property type="entry name" value="CYTOCHROME B"/>
    <property type="match status" value="1"/>
</dbReference>
<dbReference type="PANTHER" id="PTHR19271:SF16">
    <property type="entry name" value="CYTOCHROME B"/>
    <property type="match status" value="1"/>
</dbReference>
<dbReference type="Pfam" id="PF00032">
    <property type="entry name" value="Cytochrom_B_C"/>
    <property type="match status" value="1"/>
</dbReference>
<dbReference type="Pfam" id="PF00033">
    <property type="entry name" value="Cytochrome_B"/>
    <property type="match status" value="1"/>
</dbReference>
<dbReference type="PIRSF" id="PIRSF038885">
    <property type="entry name" value="COB"/>
    <property type="match status" value="1"/>
</dbReference>
<dbReference type="SUPFAM" id="SSF81648">
    <property type="entry name" value="a domain/subunit of cytochrome bc1 complex (Ubiquinol-cytochrome c reductase)"/>
    <property type="match status" value="1"/>
</dbReference>
<dbReference type="SUPFAM" id="SSF81342">
    <property type="entry name" value="Transmembrane di-heme cytochromes"/>
    <property type="match status" value="1"/>
</dbReference>
<dbReference type="PROSITE" id="PS51003">
    <property type="entry name" value="CYTB_CTER"/>
    <property type="match status" value="1"/>
</dbReference>
<dbReference type="PROSITE" id="PS51002">
    <property type="entry name" value="CYTB_NTER"/>
    <property type="match status" value="1"/>
</dbReference>
<sequence length="385" mass="43656">MAFRKSNVYLSLVNSYIIDSPQPSSINYWWNMGSLLGLCLVIQIVTGIFMAMHYSSNIELAFSSVEHIMRDVHNGYILRYLHANGASFFFMVMFMHMAKGLYYGSYRSPRVTLWNVGVIIFILTIATAFLGYCCVYGQMSHWGATVITNLFSAIPFVGNDIVSWLWGGFSVSNPTIQRFFALHYLVPFIIAAMVIMHLMALHIHGSSNPLGITGNLDRIPMHSYFIFKDLVTVFLFMLILALFVFYSPNTLGHPDNYIPGNPLVTPASIVPEWYLLPFYAILRSIPDKLLGVITMFAAILVLLVLPFTDRSVVRGNTFKVLSKFFFFIFVFNFVLLGQIGACHVEVPYVLMGQIATFIYFAYFLIIVPVISTIENVLFYIGRVNK</sequence>
<protein>
    <recommendedName>
        <fullName>Cytochrome b</fullName>
        <ecNumber evidence="10 17">7.1.1.8</ecNumber>
    </recommendedName>
    <alternativeName>
        <fullName>Complex III subunit 3</fullName>
    </alternativeName>
    <alternativeName>
        <fullName>Complex III subunit CYTB</fullName>
    </alternativeName>
    <alternativeName>
        <fullName>Complex III subunit III</fullName>
    </alternativeName>
    <alternativeName>
        <fullName>Cytochrome b-c1 complex subunit 3</fullName>
    </alternativeName>
    <alternativeName>
        <fullName>Cytochrome b-c1 complex subunit CYTB</fullName>
    </alternativeName>
    <alternativeName>
        <fullName>Ubiquinol-cytochrome c oxidoreductase complex cytochrome b subunit</fullName>
    </alternativeName>
</protein>
<accession>P00163</accession>
<accession>A0A0A7NYK0</accession>
<accession>Q35802</accession>
<accession>Q35807</accession>
<accession>Q36301</accession>
<accession>Q9ZZW9</accession>
<reference key="1">
    <citation type="journal article" date="1980" name="J. Biol. Chem.">
        <title>Assembly of the mitochondrial membrane system. DNA sequence and organization of the cytochrome b gene in Saccharomyces cerevisiae D273-10B.</title>
        <authorList>
            <person name="Nobrega F.G."/>
            <person name="Tzagoloff A."/>
        </authorList>
    </citation>
    <scope>NUCLEOTIDE SEQUENCE [GENOMIC DNA]</scope>
    <source>
        <strain>D273-10B/A21</strain>
    </source>
</reference>
<reference key="2">
    <citation type="journal article" date="1984" name="Braz. J. Med. Biol. Res.">
        <title>Revision of the nucleotide sequence at the last intron of the mitochondrial apocytochrome b gene in Saccharomyces cerevisiae.</title>
        <authorList>
            <person name="Bonjardim C.A."/>
            <person name="Nobrega F.G."/>
        </authorList>
    </citation>
    <scope>NUCLEOTIDE SEQUENCE [GENOMIC DNA]</scope>
    <source>
        <strain>D273-10B/A21</strain>
    </source>
</reference>
<reference key="3">
    <citation type="journal article" date="1995" name="Eur. J. Biochem.">
        <title>Limitations to in vivo import of hydrophobic proteins into yeast mitochondria. The case of a cytoplasmically synthesized apocytochrome b.</title>
        <authorList>
            <person name="Claros M.G."/>
            <person name="Perea J."/>
            <person name="Shu Y."/>
            <person name="Samatey F.A."/>
            <person name="Popot J.-L."/>
            <person name="Jacq C."/>
        </authorList>
    </citation>
    <scope>NUCLEOTIDE SEQUENCE [MRNA]</scope>
    <scope>VARIANT THR-122</scope>
    <source>
        <strain>ATCC 44821 / 777-3A</strain>
    </source>
</reference>
<reference key="4">
    <citation type="journal article" date="1998" name="FEBS Lett.">
        <title>The complete sequence of the mitochondrial genome of Saccharomyces cerevisiae.</title>
        <authorList>
            <person name="Foury F."/>
            <person name="Roganti T."/>
            <person name="Lecrenier N."/>
            <person name="Purnelle B."/>
        </authorList>
    </citation>
    <scope>NUCLEOTIDE SEQUENCE [LARGE SCALE GENOMIC DNA]</scope>
    <source>
        <strain>ATCC 96604 / S288c / FY1679</strain>
    </source>
</reference>
<reference key="5">
    <citation type="journal article" date="2014" name="G3 (Bethesda)">
        <title>The reference genome sequence of Saccharomyces cerevisiae: Then and now.</title>
        <authorList>
            <person name="Engel S.R."/>
            <person name="Dietrich F.S."/>
            <person name="Fisk D.G."/>
            <person name="Binkley G."/>
            <person name="Balakrishnan R."/>
            <person name="Costanzo M.C."/>
            <person name="Dwight S.S."/>
            <person name="Hitz B.C."/>
            <person name="Karra K."/>
            <person name="Nash R.S."/>
            <person name="Weng S."/>
            <person name="Wong E.D."/>
            <person name="Lloyd P."/>
            <person name="Skrzypek M.S."/>
            <person name="Miyasato S.R."/>
            <person name="Simison M."/>
            <person name="Cherry J.M."/>
        </authorList>
    </citation>
    <scope>GENOME REANNOTATION</scope>
    <source>
        <strain>ATCC 96604 / S288c / FY1679</strain>
    </source>
</reference>
<reference key="6">
    <citation type="journal article" date="1980" name="Cell">
        <title>Sequence of introns and flanking exons in wild-type and box3 mutants of cytochrome b reveals an interlaced splicing protein coded by an intron.</title>
        <authorList>
            <person name="Lazowska J."/>
            <person name="Jacq C."/>
            <person name="Slonimski P.P."/>
        </authorList>
    </citation>
    <scope>NUCLEOTIDE SEQUENCE [GENOMIC DNA] OF 20-149</scope>
    <scope>VARIANT THR-122</scope>
    <source>
        <strain>ATCC 44821 / 777-3A</strain>
    </source>
</reference>
<reference key="7">
    <citation type="journal article" date="1981" name="Cell">
        <title>Splice points of the third intron in the yeast mitochondrial cytochrome b gene.</title>
        <authorList>
            <person name="Lazowska J."/>
            <person name="Jacq C."/>
            <person name="Slonimski P.P."/>
        </authorList>
    </citation>
    <scope>NUCLEOTIDE SEQUENCE [GENOMIC DNA] OF 162-176</scope>
    <source>
        <strain>ATCC 44821 / 777-3A</strain>
    </source>
</reference>
<reference key="8">
    <citation type="journal article" date="1989" name="FEBS Lett.">
        <title>Electron-transfer restoration by vitamin K3 in a complex III-deficient mutant of S. cerevisiae and sequence of the corresponding cytochrome b mutation.</title>
        <authorList>
            <person name="Brivet-Chevillotte P."/>
            <person name="di Rago J.-P."/>
        </authorList>
    </citation>
    <scope>FUNCTION</scope>
    <scope>MUTAGENESIS OF GLY-131</scope>
</reference>
<reference key="9">
    <citation type="journal article" date="1994" name="Arch. Biochem. Biophys.">
        <title>Biochemical evidence for the orientation of cytochrome b in the yeast mitochondrial membrane in the eight-helix model.</title>
        <authorList>
            <person name="Beattie D.S."/>
            <person name="Jenkins H.C."/>
            <person name="Howton M.M."/>
        </authorList>
    </citation>
    <scope>FUNCTION</scope>
    <scope>SUBCELLULAR LOCATION</scope>
    <scope>TOPOLOGY</scope>
    <scope>PROTEIN SEQUENCE OF 66-76</scope>
</reference>
<reference key="10">
    <citation type="journal article" date="2000" name="EMBO J.">
        <title>Supercomplexes in the respiratory chains of yeast and mammalian mitochondria.</title>
        <authorList>
            <person name="Schaegger H."/>
            <person name="Pfeiffer K."/>
        </authorList>
    </citation>
    <scope>FORMATION OF CYTOCHROME BC1-CYTOCHROME C OXIDASE SUPERCOMPLEX</scope>
</reference>
<reference key="11">
    <citation type="journal article" date="2000" name="J. Biol. Chem.">
        <title>The cytochrome bc1 and cytochrome c oxidase complexes associate to form a single supracomplex in yeast mitochondria.</title>
        <authorList>
            <person name="Cruciat C.M."/>
            <person name="Brunner S."/>
            <person name="Baumann F."/>
            <person name="Neupert W."/>
            <person name="Stuart R.A."/>
        </authorList>
    </citation>
    <scope>FORMATION OF CYTOCHROME BC1-CYTOCHROME C OXIDASE SUPERCOMPLEX</scope>
</reference>
<reference key="12">
    <citation type="journal article" date="2000" name="Structure">
        <title>Structure at 2.3 A resolution of the cytochrome bc1 complex from the yeast Saccharomyces cerevisiae co-crystallized with an antibody Fv fragment.</title>
        <authorList>
            <person name="Hunte C."/>
            <person name="Koepke J."/>
            <person name="Lange C."/>
            <person name="Rossmanith T."/>
            <person name="Michel H."/>
        </authorList>
    </citation>
    <scope>X-RAY CRYSTALLOGRAPHY (2.3 ANGSTROMS) IN COMPLEX WITH HEME AND OTHER SUBUNITS OF THE BC1 COMPLEX</scope>
    <scope>COFACTOR</scope>
    <scope>TOPOLOGY</scope>
    <scope>SUBUNIT</scope>
</reference>
<reference key="13">
    <citation type="journal article" date="2002" name="Proc. Natl. Acad. Sci. U.S.A.">
        <title>Crystal structure of the yeast cytochrome bc1 complex with its bound substrate cytochrome c.</title>
        <authorList>
            <person name="Lange C."/>
            <person name="Hunte C."/>
        </authorList>
    </citation>
    <scope>X-RAY CRYSTALLOGRAPHY (2.97 ANGSTROMS) IN COMPLEX WITH HEME AND OTHER SUBUNITS OF THE BC1 COMPLEX</scope>
    <scope>COFACTOR</scope>
    <scope>TOPOLOGY</scope>
    <scope>SUBUNIT</scope>
</reference>
<reference key="14">
    <citation type="journal article" date="2008" name="J. Biol. Chem.">
        <title>Structure of complex III with bound cytochrome c in reduced state and definition of a minimal core interface for electron transfer.</title>
        <authorList>
            <person name="Solmaz S.R."/>
            <person name="Hunte C."/>
        </authorList>
    </citation>
    <scope>X-RAY CRYSTALLOGRAPHY (1.90 ANGSTROMS)</scope>
</reference>
<reference key="15">
    <citation type="journal article" date="2019" name="Nat. Struct. Mol. Biol.">
        <title>Cryo-EM structure of the yeast respiratory supercomplex.</title>
        <authorList>
            <person name="Rathore S."/>
            <person name="Berndtsson J."/>
            <person name="Marin-Buera L."/>
            <person name="Conrad J."/>
            <person name="Carroni M."/>
            <person name="Brzezinski P."/>
            <person name="Ott M."/>
        </authorList>
    </citation>
    <scope>STRUCTURE BY ELECTRON MICROSCOPY (3.23 ANGSTROMS) IN COMPLEX WITH HEME AND UBIQUINONE</scope>
</reference>
<reference key="16">
    <citation type="journal article" date="2019" name="Nat. Struct. Mol. Biol.">
        <title>Structure of yeast cytochrome c oxidase in a supercomplex with cytochrome bc1.</title>
        <authorList>
            <person name="Hartley A.M."/>
            <person name="Lukoyanova N."/>
            <person name="Zhang Y."/>
            <person name="Cabrera-Orefice A."/>
            <person name="Arnold S."/>
            <person name="Meunier B."/>
            <person name="Pinotsis N."/>
            <person name="Marechal A."/>
        </authorList>
    </citation>
    <scope>STRUCTURE BY ELECTRON MICROSCOPY (3.35 ANGSTROMS) IN COMPLEX WITH HEME AND UBIQUINONE</scope>
</reference>
<proteinExistence type="evidence at protein level"/>
<keyword id="KW-0002">3D-structure</keyword>
<keyword id="KW-0903">Direct protein sequencing</keyword>
<keyword id="KW-0249">Electron transport</keyword>
<keyword id="KW-0349">Heme</keyword>
<keyword id="KW-0408">Iron</keyword>
<keyword id="KW-0472">Membrane</keyword>
<keyword id="KW-0479">Metal-binding</keyword>
<keyword id="KW-0496">Mitochondrion</keyword>
<keyword id="KW-0999">Mitochondrion inner membrane</keyword>
<keyword id="KW-1185">Reference proteome</keyword>
<keyword id="KW-0679">Respiratory chain</keyword>
<keyword id="KW-1278">Translocase</keyword>
<keyword id="KW-0812">Transmembrane</keyword>
<keyword id="KW-1133">Transmembrane helix</keyword>
<keyword id="KW-0813">Transport</keyword>
<keyword id="KW-0830">Ubiquinone</keyword>